<feature type="chain" id="PRO_0000230815" description="3-hydroxyacyl-[acyl-carrier-protein] dehydratase FabZ">
    <location>
        <begin position="1"/>
        <end position="148"/>
    </location>
</feature>
<feature type="active site" evidence="1">
    <location>
        <position position="55"/>
    </location>
</feature>
<organism>
    <name type="scientific">Haemophilus influenzae (strain 86-028NP)</name>
    <dbReference type="NCBI Taxonomy" id="281310"/>
    <lineage>
        <taxon>Bacteria</taxon>
        <taxon>Pseudomonadati</taxon>
        <taxon>Pseudomonadota</taxon>
        <taxon>Gammaproteobacteria</taxon>
        <taxon>Pasteurellales</taxon>
        <taxon>Pasteurellaceae</taxon>
        <taxon>Haemophilus</taxon>
    </lineage>
</organism>
<name>FABZ_HAEI8</name>
<evidence type="ECO:0000255" key="1">
    <source>
        <dbReference type="HAMAP-Rule" id="MF_00406"/>
    </source>
</evidence>
<comment type="function">
    <text evidence="1">Involved in unsaturated fatty acids biosynthesis. Catalyzes the dehydration of short chain beta-hydroxyacyl-ACPs and long chain saturated and unsaturated beta-hydroxyacyl-ACPs.</text>
</comment>
<comment type="catalytic activity">
    <reaction evidence="1">
        <text>a (3R)-hydroxyacyl-[ACP] = a (2E)-enoyl-[ACP] + H2O</text>
        <dbReference type="Rhea" id="RHEA:13097"/>
        <dbReference type="Rhea" id="RHEA-COMP:9925"/>
        <dbReference type="Rhea" id="RHEA-COMP:9945"/>
        <dbReference type="ChEBI" id="CHEBI:15377"/>
        <dbReference type="ChEBI" id="CHEBI:78784"/>
        <dbReference type="ChEBI" id="CHEBI:78827"/>
        <dbReference type="EC" id="4.2.1.59"/>
    </reaction>
</comment>
<comment type="subcellular location">
    <subcellularLocation>
        <location evidence="1">Cytoplasm</location>
    </subcellularLocation>
</comment>
<comment type="similarity">
    <text evidence="1">Belongs to the thioester dehydratase family. FabZ subfamily.</text>
</comment>
<protein>
    <recommendedName>
        <fullName evidence="1">3-hydroxyacyl-[acyl-carrier-protein] dehydratase FabZ</fullName>
        <ecNumber evidence="1">4.2.1.59</ecNumber>
    </recommendedName>
    <alternativeName>
        <fullName evidence="1">(3R)-hydroxymyristoyl-[acyl-carrier-protein] dehydratase</fullName>
        <shortName evidence="1">(3R)-hydroxymyristoyl-ACP dehydrase</shortName>
    </alternativeName>
    <alternativeName>
        <fullName evidence="1">Beta-hydroxyacyl-ACP dehydratase</fullName>
    </alternativeName>
</protein>
<keyword id="KW-0963">Cytoplasm</keyword>
<keyword id="KW-0441">Lipid A biosynthesis</keyword>
<keyword id="KW-0444">Lipid biosynthesis</keyword>
<keyword id="KW-0443">Lipid metabolism</keyword>
<keyword id="KW-0456">Lyase</keyword>
<proteinExistence type="inferred from homology"/>
<dbReference type="EC" id="4.2.1.59" evidence="1"/>
<dbReference type="EMBL" id="CP000057">
    <property type="protein sequence ID" value="AAX88073.1"/>
    <property type="molecule type" value="Genomic_DNA"/>
</dbReference>
<dbReference type="SMR" id="Q4QLM4"/>
<dbReference type="KEGG" id="hit:NTHI1223"/>
<dbReference type="HOGENOM" id="CLU_078912_1_0_6"/>
<dbReference type="Proteomes" id="UP000002525">
    <property type="component" value="Chromosome"/>
</dbReference>
<dbReference type="GO" id="GO:0005737">
    <property type="term" value="C:cytoplasm"/>
    <property type="evidence" value="ECO:0007669"/>
    <property type="project" value="UniProtKB-SubCell"/>
</dbReference>
<dbReference type="GO" id="GO:0016020">
    <property type="term" value="C:membrane"/>
    <property type="evidence" value="ECO:0007669"/>
    <property type="project" value="GOC"/>
</dbReference>
<dbReference type="GO" id="GO:0019171">
    <property type="term" value="F:(3R)-hydroxyacyl-[acyl-carrier-protein] dehydratase activity"/>
    <property type="evidence" value="ECO:0007669"/>
    <property type="project" value="UniProtKB-EC"/>
</dbReference>
<dbReference type="GO" id="GO:0006633">
    <property type="term" value="P:fatty acid biosynthetic process"/>
    <property type="evidence" value="ECO:0007669"/>
    <property type="project" value="UniProtKB-UniRule"/>
</dbReference>
<dbReference type="GO" id="GO:0009245">
    <property type="term" value="P:lipid A biosynthetic process"/>
    <property type="evidence" value="ECO:0007669"/>
    <property type="project" value="UniProtKB-UniRule"/>
</dbReference>
<dbReference type="CDD" id="cd01288">
    <property type="entry name" value="FabZ"/>
    <property type="match status" value="1"/>
</dbReference>
<dbReference type="FunFam" id="3.10.129.10:FF:000001">
    <property type="entry name" value="3-hydroxyacyl-[acyl-carrier-protein] dehydratase FabZ"/>
    <property type="match status" value="1"/>
</dbReference>
<dbReference type="Gene3D" id="3.10.129.10">
    <property type="entry name" value="Hotdog Thioesterase"/>
    <property type="match status" value="1"/>
</dbReference>
<dbReference type="HAMAP" id="MF_00406">
    <property type="entry name" value="FabZ"/>
    <property type="match status" value="1"/>
</dbReference>
<dbReference type="InterPro" id="IPR013114">
    <property type="entry name" value="FabA_FabZ"/>
</dbReference>
<dbReference type="InterPro" id="IPR010084">
    <property type="entry name" value="FabZ"/>
</dbReference>
<dbReference type="InterPro" id="IPR029069">
    <property type="entry name" value="HotDog_dom_sf"/>
</dbReference>
<dbReference type="NCBIfam" id="TIGR01750">
    <property type="entry name" value="fabZ"/>
    <property type="match status" value="1"/>
</dbReference>
<dbReference type="NCBIfam" id="NF000582">
    <property type="entry name" value="PRK00006.1"/>
    <property type="match status" value="1"/>
</dbReference>
<dbReference type="PANTHER" id="PTHR30272">
    <property type="entry name" value="3-HYDROXYACYL-[ACYL-CARRIER-PROTEIN] DEHYDRATASE"/>
    <property type="match status" value="1"/>
</dbReference>
<dbReference type="PANTHER" id="PTHR30272:SF1">
    <property type="entry name" value="3-HYDROXYACYL-[ACYL-CARRIER-PROTEIN] DEHYDRATASE"/>
    <property type="match status" value="1"/>
</dbReference>
<dbReference type="Pfam" id="PF07977">
    <property type="entry name" value="FabA"/>
    <property type="match status" value="1"/>
</dbReference>
<dbReference type="SUPFAM" id="SSF54637">
    <property type="entry name" value="Thioesterase/thiol ester dehydrase-isomerase"/>
    <property type="match status" value="1"/>
</dbReference>
<accession>Q4QLM4</accession>
<reference key="1">
    <citation type="journal article" date="2005" name="J. Bacteriol.">
        <title>Genomic sequence of an otitis media isolate of nontypeable Haemophilus influenzae: comparative study with H. influenzae serotype d, strain KW20.</title>
        <authorList>
            <person name="Harrison A."/>
            <person name="Dyer D.W."/>
            <person name="Gillaspy A."/>
            <person name="Ray W.C."/>
            <person name="Mungur R."/>
            <person name="Carson M.B."/>
            <person name="Zhong H."/>
            <person name="Gipson J."/>
            <person name="Gipson M."/>
            <person name="Johnson L.S."/>
            <person name="Lewis L."/>
            <person name="Bakaletz L.O."/>
            <person name="Munson R.S. Jr."/>
        </authorList>
    </citation>
    <scope>NUCLEOTIDE SEQUENCE [LARGE SCALE GENOMIC DNA]</scope>
    <source>
        <strain>86-028NP</strain>
    </source>
</reference>
<gene>
    <name evidence="1" type="primary">fabZ</name>
    <name type="ordered locus">NTHI1223</name>
</gene>
<sequence>MSEQQPRVIESKEIMTLLPHRYPFLLVDRVLDFKEGEWLKAIKNISVNEPCFTGHFPGEPILPGVLILEALAQAMGILAFKTLELKGGELFYFAGIDEARFKRPVLPGDQMELNVQVIKERRGITSFTGVATVNGEIACEAKLMCARR</sequence>